<feature type="chain" id="PRO_1000007144" description="Imidazolonepropionase">
    <location>
        <begin position="1"/>
        <end position="405"/>
    </location>
</feature>
<feature type="binding site" evidence="1">
    <location>
        <position position="73"/>
    </location>
    <ligand>
        <name>Fe(3+)</name>
        <dbReference type="ChEBI" id="CHEBI:29034"/>
    </ligand>
</feature>
<feature type="binding site" evidence="1">
    <location>
        <position position="73"/>
    </location>
    <ligand>
        <name>Zn(2+)</name>
        <dbReference type="ChEBI" id="CHEBI:29105"/>
    </ligand>
</feature>
<feature type="binding site" evidence="1">
    <location>
        <position position="75"/>
    </location>
    <ligand>
        <name>Fe(3+)</name>
        <dbReference type="ChEBI" id="CHEBI:29034"/>
    </ligand>
</feature>
<feature type="binding site" evidence="1">
    <location>
        <position position="75"/>
    </location>
    <ligand>
        <name>Zn(2+)</name>
        <dbReference type="ChEBI" id="CHEBI:29105"/>
    </ligand>
</feature>
<feature type="binding site" evidence="1">
    <location>
        <position position="82"/>
    </location>
    <ligand>
        <name>4-imidazolone-5-propanoate</name>
        <dbReference type="ChEBI" id="CHEBI:77893"/>
    </ligand>
</feature>
<feature type="binding site" evidence="1">
    <location>
        <position position="145"/>
    </location>
    <ligand>
        <name>4-imidazolone-5-propanoate</name>
        <dbReference type="ChEBI" id="CHEBI:77893"/>
    </ligand>
</feature>
<feature type="binding site" evidence="1">
    <location>
        <position position="145"/>
    </location>
    <ligand>
        <name>N-formimidoyl-L-glutamate</name>
        <dbReference type="ChEBI" id="CHEBI:58928"/>
    </ligand>
</feature>
<feature type="binding site" evidence="1">
    <location>
        <position position="178"/>
    </location>
    <ligand>
        <name>4-imidazolone-5-propanoate</name>
        <dbReference type="ChEBI" id="CHEBI:77893"/>
    </ligand>
</feature>
<feature type="binding site" evidence="1">
    <location>
        <position position="243"/>
    </location>
    <ligand>
        <name>Fe(3+)</name>
        <dbReference type="ChEBI" id="CHEBI:29034"/>
    </ligand>
</feature>
<feature type="binding site" evidence="1">
    <location>
        <position position="243"/>
    </location>
    <ligand>
        <name>Zn(2+)</name>
        <dbReference type="ChEBI" id="CHEBI:29105"/>
    </ligand>
</feature>
<feature type="binding site" evidence="1">
    <location>
        <position position="246"/>
    </location>
    <ligand>
        <name>4-imidazolone-5-propanoate</name>
        <dbReference type="ChEBI" id="CHEBI:77893"/>
    </ligand>
</feature>
<feature type="binding site" evidence="1">
    <location>
        <position position="318"/>
    </location>
    <ligand>
        <name>Fe(3+)</name>
        <dbReference type="ChEBI" id="CHEBI:29034"/>
    </ligand>
</feature>
<feature type="binding site" evidence="1">
    <location>
        <position position="318"/>
    </location>
    <ligand>
        <name>Zn(2+)</name>
        <dbReference type="ChEBI" id="CHEBI:29105"/>
    </ligand>
</feature>
<feature type="binding site" evidence="1">
    <location>
        <position position="320"/>
    </location>
    <ligand>
        <name>N-formimidoyl-L-glutamate</name>
        <dbReference type="ChEBI" id="CHEBI:58928"/>
    </ligand>
</feature>
<feature type="binding site" evidence="1">
    <location>
        <position position="322"/>
    </location>
    <ligand>
        <name>N-formimidoyl-L-glutamate</name>
        <dbReference type="ChEBI" id="CHEBI:58928"/>
    </ligand>
</feature>
<feature type="binding site" evidence="1">
    <location>
        <position position="323"/>
    </location>
    <ligand>
        <name>4-imidazolone-5-propanoate</name>
        <dbReference type="ChEBI" id="CHEBI:77893"/>
    </ligand>
</feature>
<comment type="function">
    <text evidence="1">Catalyzes the hydrolytic cleavage of the carbon-nitrogen bond in imidazolone-5-propanoate to yield N-formimidoyl-L-glutamate. It is the third step in the universal histidine degradation pathway.</text>
</comment>
<comment type="catalytic activity">
    <reaction evidence="1">
        <text>4-imidazolone-5-propanoate + H2O = N-formimidoyl-L-glutamate</text>
        <dbReference type="Rhea" id="RHEA:23660"/>
        <dbReference type="ChEBI" id="CHEBI:15377"/>
        <dbReference type="ChEBI" id="CHEBI:58928"/>
        <dbReference type="ChEBI" id="CHEBI:77893"/>
        <dbReference type="EC" id="3.5.2.7"/>
    </reaction>
</comment>
<comment type="cofactor">
    <cofactor evidence="1">
        <name>Zn(2+)</name>
        <dbReference type="ChEBI" id="CHEBI:29105"/>
    </cofactor>
    <cofactor evidence="1">
        <name>Fe(3+)</name>
        <dbReference type="ChEBI" id="CHEBI:29034"/>
    </cofactor>
    <text evidence="1">Binds 1 zinc or iron ion per subunit.</text>
</comment>
<comment type="pathway">
    <text evidence="1">Amino-acid degradation; L-histidine degradation into L-glutamate; N-formimidoyl-L-glutamate from L-histidine: step 3/3.</text>
</comment>
<comment type="subcellular location">
    <subcellularLocation>
        <location evidence="1">Cytoplasm</location>
    </subcellularLocation>
</comment>
<comment type="similarity">
    <text evidence="1">Belongs to the metallo-dependent hydrolases superfamily. HutI family.</text>
</comment>
<reference key="1">
    <citation type="journal article" date="2011" name="J. Bacteriol.">
        <title>Genome of Ochrobactrum anthropi ATCC 49188 T, a versatile opportunistic pathogen and symbiont of several eukaryotic hosts.</title>
        <authorList>
            <person name="Chain P.S."/>
            <person name="Lang D.M."/>
            <person name="Comerci D.J."/>
            <person name="Malfatti S.A."/>
            <person name="Vergez L.M."/>
            <person name="Shin M."/>
            <person name="Ugalde R.A."/>
            <person name="Garcia E."/>
            <person name="Tolmasky M.E."/>
        </authorList>
    </citation>
    <scope>NUCLEOTIDE SEQUENCE [LARGE SCALE GENOMIC DNA]</scope>
    <source>
        <strain>ATCC 49188 / DSM 6882 / CCUG 24695 / JCM 21032 / LMG 3331 / NBRC 15819 / NCTC 12168 / Alc 37</strain>
    </source>
</reference>
<sequence length="405" mass="43487">MPDKTSYIFSNARIATLGENAEGLGLIDNAVLAVKDGKIAYVGPENALPAEYASFEKIDCENRLITPGLVDCHTHLVHAGNRAHEFELRLNGATYEEVARAGGGIVSSVKNLRAASEDDLVRETLPRLDALIAEGVTTVEVKSGYGLDRDSEIKSLKAARRLGEERDVTVRTTFLGAHALPPEMNGDKAAYIDRVINDMLPAIAAENLADAVDGFCEGIAFLPDEIARVFDAAKAHNIPVKLHADQLSNLHGAALAASYDALSADHLEYTDADGATAMAKAGTVAVLLPGAYYFIRETQKPPVELFRAAGTKMALATDNNPGTSPLTSLLLTMNMGATLFRMTVDECIAGVTREAARALGLLDQTGTLEIGKDADLAIWDVERPAELVYRIGFNPLWKRVFKGQI</sequence>
<keyword id="KW-0963">Cytoplasm</keyword>
<keyword id="KW-0369">Histidine metabolism</keyword>
<keyword id="KW-0378">Hydrolase</keyword>
<keyword id="KW-0408">Iron</keyword>
<keyword id="KW-0479">Metal-binding</keyword>
<keyword id="KW-1185">Reference proteome</keyword>
<keyword id="KW-0862">Zinc</keyword>
<dbReference type="EC" id="3.5.2.7" evidence="1"/>
<dbReference type="EMBL" id="CP000758">
    <property type="protein sequence ID" value="ABS14153.1"/>
    <property type="molecule type" value="Genomic_DNA"/>
</dbReference>
<dbReference type="RefSeq" id="WP_012091501.1">
    <property type="nucleotide sequence ID" value="NC_009667.1"/>
</dbReference>
<dbReference type="SMR" id="A6WYU9"/>
<dbReference type="STRING" id="439375.Oant_1436"/>
<dbReference type="KEGG" id="oan:Oant_1436"/>
<dbReference type="PATRIC" id="fig|439375.7.peg.1505"/>
<dbReference type="eggNOG" id="COG1228">
    <property type="taxonomic scope" value="Bacteria"/>
</dbReference>
<dbReference type="HOGENOM" id="CLU_041647_0_0_5"/>
<dbReference type="PhylomeDB" id="A6WYU9"/>
<dbReference type="UniPathway" id="UPA00379">
    <property type="reaction ID" value="UER00551"/>
</dbReference>
<dbReference type="Proteomes" id="UP000002301">
    <property type="component" value="Chromosome 1"/>
</dbReference>
<dbReference type="GO" id="GO:0005737">
    <property type="term" value="C:cytoplasm"/>
    <property type="evidence" value="ECO:0007669"/>
    <property type="project" value="UniProtKB-SubCell"/>
</dbReference>
<dbReference type="GO" id="GO:0050480">
    <property type="term" value="F:imidazolonepropionase activity"/>
    <property type="evidence" value="ECO:0007669"/>
    <property type="project" value="UniProtKB-UniRule"/>
</dbReference>
<dbReference type="GO" id="GO:0005506">
    <property type="term" value="F:iron ion binding"/>
    <property type="evidence" value="ECO:0007669"/>
    <property type="project" value="UniProtKB-UniRule"/>
</dbReference>
<dbReference type="GO" id="GO:0008270">
    <property type="term" value="F:zinc ion binding"/>
    <property type="evidence" value="ECO:0007669"/>
    <property type="project" value="UniProtKB-UniRule"/>
</dbReference>
<dbReference type="GO" id="GO:0019556">
    <property type="term" value="P:L-histidine catabolic process to glutamate and formamide"/>
    <property type="evidence" value="ECO:0007669"/>
    <property type="project" value="UniProtKB-UniPathway"/>
</dbReference>
<dbReference type="GO" id="GO:0019557">
    <property type="term" value="P:L-histidine catabolic process to glutamate and formate"/>
    <property type="evidence" value="ECO:0007669"/>
    <property type="project" value="UniProtKB-UniPathway"/>
</dbReference>
<dbReference type="CDD" id="cd01296">
    <property type="entry name" value="Imidazolone-5PH"/>
    <property type="match status" value="1"/>
</dbReference>
<dbReference type="FunFam" id="3.20.20.140:FF:000007">
    <property type="entry name" value="Imidazolonepropionase"/>
    <property type="match status" value="1"/>
</dbReference>
<dbReference type="Gene3D" id="3.20.20.140">
    <property type="entry name" value="Metal-dependent hydrolases"/>
    <property type="match status" value="1"/>
</dbReference>
<dbReference type="Gene3D" id="2.30.40.10">
    <property type="entry name" value="Urease, subunit C, domain 1"/>
    <property type="match status" value="1"/>
</dbReference>
<dbReference type="HAMAP" id="MF_00372">
    <property type="entry name" value="HutI"/>
    <property type="match status" value="1"/>
</dbReference>
<dbReference type="InterPro" id="IPR006680">
    <property type="entry name" value="Amidohydro-rel"/>
</dbReference>
<dbReference type="InterPro" id="IPR005920">
    <property type="entry name" value="HutI"/>
</dbReference>
<dbReference type="InterPro" id="IPR011059">
    <property type="entry name" value="Metal-dep_hydrolase_composite"/>
</dbReference>
<dbReference type="InterPro" id="IPR032466">
    <property type="entry name" value="Metal_Hydrolase"/>
</dbReference>
<dbReference type="NCBIfam" id="TIGR01224">
    <property type="entry name" value="hutI"/>
    <property type="match status" value="1"/>
</dbReference>
<dbReference type="PANTHER" id="PTHR42752">
    <property type="entry name" value="IMIDAZOLONEPROPIONASE"/>
    <property type="match status" value="1"/>
</dbReference>
<dbReference type="PANTHER" id="PTHR42752:SF1">
    <property type="entry name" value="IMIDAZOLONEPROPIONASE-RELATED"/>
    <property type="match status" value="1"/>
</dbReference>
<dbReference type="Pfam" id="PF01979">
    <property type="entry name" value="Amidohydro_1"/>
    <property type="match status" value="1"/>
</dbReference>
<dbReference type="SUPFAM" id="SSF51338">
    <property type="entry name" value="Composite domain of metallo-dependent hydrolases"/>
    <property type="match status" value="1"/>
</dbReference>
<dbReference type="SUPFAM" id="SSF51556">
    <property type="entry name" value="Metallo-dependent hydrolases"/>
    <property type="match status" value="1"/>
</dbReference>
<organism>
    <name type="scientific">Brucella anthropi (strain ATCC 49188 / DSM 6882 / CCUG 24695 / JCM 21032 / LMG 3331 / NBRC 15819 / NCTC 12168 / Alc 37)</name>
    <name type="common">Ochrobactrum anthropi</name>
    <dbReference type="NCBI Taxonomy" id="439375"/>
    <lineage>
        <taxon>Bacteria</taxon>
        <taxon>Pseudomonadati</taxon>
        <taxon>Pseudomonadota</taxon>
        <taxon>Alphaproteobacteria</taxon>
        <taxon>Hyphomicrobiales</taxon>
        <taxon>Brucellaceae</taxon>
        <taxon>Brucella/Ochrobactrum group</taxon>
        <taxon>Brucella</taxon>
    </lineage>
</organism>
<proteinExistence type="inferred from homology"/>
<protein>
    <recommendedName>
        <fullName evidence="1">Imidazolonepropionase</fullName>
        <ecNumber evidence="1">3.5.2.7</ecNumber>
    </recommendedName>
    <alternativeName>
        <fullName evidence="1">Imidazolone-5-propionate hydrolase</fullName>
    </alternativeName>
</protein>
<gene>
    <name evidence="1" type="primary">hutI</name>
    <name type="ordered locus">Oant_1436</name>
</gene>
<name>HUTI_BRUA4</name>
<evidence type="ECO:0000255" key="1">
    <source>
        <dbReference type="HAMAP-Rule" id="MF_00372"/>
    </source>
</evidence>
<accession>A6WYU9</accession>